<protein>
    <recommendedName>
        <fullName evidence="1">Acetylglutamate kinase</fullName>
        <ecNumber evidence="1">2.7.2.8</ecNumber>
    </recommendedName>
    <alternativeName>
        <fullName evidence="1">N-acetyl-L-glutamate 5-phosphotransferase</fullName>
    </alternativeName>
    <alternativeName>
        <fullName evidence="1">NAG kinase</fullName>
        <shortName evidence="1">NAGK</shortName>
    </alternativeName>
</protein>
<comment type="function">
    <text evidence="1">Catalyzes the ATP-dependent phosphorylation of N-acetyl-L-glutamate.</text>
</comment>
<comment type="catalytic activity">
    <reaction evidence="1">
        <text>N-acetyl-L-glutamate + ATP = N-acetyl-L-glutamyl 5-phosphate + ADP</text>
        <dbReference type="Rhea" id="RHEA:14629"/>
        <dbReference type="ChEBI" id="CHEBI:30616"/>
        <dbReference type="ChEBI" id="CHEBI:44337"/>
        <dbReference type="ChEBI" id="CHEBI:57936"/>
        <dbReference type="ChEBI" id="CHEBI:456216"/>
        <dbReference type="EC" id="2.7.2.8"/>
    </reaction>
</comment>
<comment type="pathway">
    <text evidence="1">Amino-acid biosynthesis; L-arginine biosynthesis; N(2)-acetyl-L-ornithine from L-glutamate: step 2/4.</text>
</comment>
<comment type="subcellular location">
    <subcellularLocation>
        <location evidence="1">Cytoplasm</location>
    </subcellularLocation>
</comment>
<comment type="similarity">
    <text evidence="1">Belongs to the acetylglutamate kinase family. ArgB subfamily.</text>
</comment>
<accession>Q2RG64</accession>
<evidence type="ECO:0000255" key="1">
    <source>
        <dbReference type="HAMAP-Rule" id="MF_00082"/>
    </source>
</evidence>
<dbReference type="EC" id="2.7.2.8" evidence="1"/>
<dbReference type="EMBL" id="CP000232">
    <property type="protein sequence ID" value="ABC20575.1"/>
    <property type="molecule type" value="Genomic_DNA"/>
</dbReference>
<dbReference type="RefSeq" id="YP_431118.1">
    <property type="nucleotide sequence ID" value="NC_007644.1"/>
</dbReference>
<dbReference type="SMR" id="Q2RG64"/>
<dbReference type="STRING" id="264732.Moth_2288"/>
<dbReference type="EnsemblBacteria" id="ABC20575">
    <property type="protein sequence ID" value="ABC20575"/>
    <property type="gene ID" value="Moth_2288"/>
</dbReference>
<dbReference type="KEGG" id="mta:Moth_2288"/>
<dbReference type="PATRIC" id="fig|264732.11.peg.2492"/>
<dbReference type="eggNOG" id="COG0548">
    <property type="taxonomic scope" value="Bacteria"/>
</dbReference>
<dbReference type="HOGENOM" id="CLU_053680_0_0_9"/>
<dbReference type="OrthoDB" id="9803155at2"/>
<dbReference type="UniPathway" id="UPA00068">
    <property type="reaction ID" value="UER00107"/>
</dbReference>
<dbReference type="GO" id="GO:0005737">
    <property type="term" value="C:cytoplasm"/>
    <property type="evidence" value="ECO:0007669"/>
    <property type="project" value="UniProtKB-SubCell"/>
</dbReference>
<dbReference type="GO" id="GO:0003991">
    <property type="term" value="F:acetylglutamate kinase activity"/>
    <property type="evidence" value="ECO:0007669"/>
    <property type="project" value="UniProtKB-UniRule"/>
</dbReference>
<dbReference type="GO" id="GO:0005524">
    <property type="term" value="F:ATP binding"/>
    <property type="evidence" value="ECO:0007669"/>
    <property type="project" value="UniProtKB-UniRule"/>
</dbReference>
<dbReference type="GO" id="GO:0042450">
    <property type="term" value="P:arginine biosynthetic process via ornithine"/>
    <property type="evidence" value="ECO:0007669"/>
    <property type="project" value="UniProtKB-UniRule"/>
</dbReference>
<dbReference type="GO" id="GO:0006526">
    <property type="term" value="P:L-arginine biosynthetic process"/>
    <property type="evidence" value="ECO:0007669"/>
    <property type="project" value="UniProtKB-UniPathway"/>
</dbReference>
<dbReference type="CDD" id="cd04250">
    <property type="entry name" value="AAK_NAGK-C"/>
    <property type="match status" value="1"/>
</dbReference>
<dbReference type="FunFam" id="3.40.1160.10:FF:000004">
    <property type="entry name" value="Acetylglutamate kinase"/>
    <property type="match status" value="1"/>
</dbReference>
<dbReference type="Gene3D" id="3.40.1160.10">
    <property type="entry name" value="Acetylglutamate kinase-like"/>
    <property type="match status" value="1"/>
</dbReference>
<dbReference type="HAMAP" id="MF_00082">
    <property type="entry name" value="ArgB"/>
    <property type="match status" value="1"/>
</dbReference>
<dbReference type="InterPro" id="IPR036393">
    <property type="entry name" value="AceGlu_kinase-like_sf"/>
</dbReference>
<dbReference type="InterPro" id="IPR004662">
    <property type="entry name" value="AcgluKinase_fam"/>
</dbReference>
<dbReference type="InterPro" id="IPR037528">
    <property type="entry name" value="ArgB"/>
</dbReference>
<dbReference type="InterPro" id="IPR001048">
    <property type="entry name" value="Asp/Glu/Uridylate_kinase"/>
</dbReference>
<dbReference type="InterPro" id="IPR001057">
    <property type="entry name" value="Glu/AcGlu_kinase"/>
</dbReference>
<dbReference type="InterPro" id="IPR041727">
    <property type="entry name" value="NAGK-C"/>
</dbReference>
<dbReference type="NCBIfam" id="TIGR00761">
    <property type="entry name" value="argB"/>
    <property type="match status" value="1"/>
</dbReference>
<dbReference type="PANTHER" id="PTHR23342">
    <property type="entry name" value="N-ACETYLGLUTAMATE SYNTHASE"/>
    <property type="match status" value="1"/>
</dbReference>
<dbReference type="PANTHER" id="PTHR23342:SF0">
    <property type="entry name" value="N-ACETYLGLUTAMATE SYNTHASE, MITOCHONDRIAL"/>
    <property type="match status" value="1"/>
</dbReference>
<dbReference type="Pfam" id="PF00696">
    <property type="entry name" value="AA_kinase"/>
    <property type="match status" value="1"/>
</dbReference>
<dbReference type="PIRSF" id="PIRSF000728">
    <property type="entry name" value="NAGK"/>
    <property type="match status" value="1"/>
</dbReference>
<dbReference type="PRINTS" id="PR00474">
    <property type="entry name" value="GLU5KINASE"/>
</dbReference>
<dbReference type="SUPFAM" id="SSF53633">
    <property type="entry name" value="Carbamate kinase-like"/>
    <property type="match status" value="1"/>
</dbReference>
<sequence>MTLSPLEKTGILIEALPYIRQFYGKTVVIKYGGHAMVNCELKKAVMQDAVLMHLVGMRPVIVHGGGPEITSMLGRLGKQSQFIQGQRVTDAETMEIVEMVLVGKINKEIVANIHRYGGKAIGLCGKDGHLIEARKQVAHIQKDGEEMDLDLGYVGQVERVNPGIIETVIAEGYIPVVAPIGVGPEGESYNINADLVAGELAVALQADKLVLLTDVEGILADRDDPASLISSLEVGRVPELIQQGVIAGGMIPKVNCCIRALEGGVKKTHIIDGRIPHSILLEVFTDTGVGTMVVPG</sequence>
<reference key="1">
    <citation type="journal article" date="2008" name="Environ. Microbiol.">
        <title>The complete genome sequence of Moorella thermoacetica (f. Clostridium thermoaceticum).</title>
        <authorList>
            <person name="Pierce E."/>
            <person name="Xie G."/>
            <person name="Barabote R.D."/>
            <person name="Saunders E."/>
            <person name="Han C.S."/>
            <person name="Detter J.C."/>
            <person name="Richardson P."/>
            <person name="Brettin T.S."/>
            <person name="Das A."/>
            <person name="Ljungdahl L.G."/>
            <person name="Ragsdale S.W."/>
        </authorList>
    </citation>
    <scope>NUCLEOTIDE SEQUENCE [LARGE SCALE GENOMIC DNA]</scope>
    <source>
        <strain>ATCC 39073 / JCM 9320</strain>
    </source>
</reference>
<feature type="chain" id="PRO_0000264719" description="Acetylglutamate kinase">
    <location>
        <begin position="1"/>
        <end position="296"/>
    </location>
</feature>
<feature type="binding site" evidence="1">
    <location>
        <begin position="65"/>
        <end position="66"/>
    </location>
    <ligand>
        <name>substrate</name>
    </ligand>
</feature>
<feature type="binding site" evidence="1">
    <location>
        <position position="87"/>
    </location>
    <ligand>
        <name>substrate</name>
    </ligand>
</feature>
<feature type="binding site" evidence="1">
    <location>
        <position position="190"/>
    </location>
    <ligand>
        <name>substrate</name>
    </ligand>
</feature>
<feature type="site" description="Transition state stabilizer" evidence="1">
    <location>
        <position position="30"/>
    </location>
</feature>
<feature type="site" description="Transition state stabilizer" evidence="1">
    <location>
        <position position="253"/>
    </location>
</feature>
<proteinExistence type="inferred from homology"/>
<gene>
    <name evidence="1" type="primary">argB</name>
    <name type="ordered locus">Moth_2288</name>
</gene>
<keyword id="KW-0028">Amino-acid biosynthesis</keyword>
<keyword id="KW-0055">Arginine biosynthesis</keyword>
<keyword id="KW-0067">ATP-binding</keyword>
<keyword id="KW-0963">Cytoplasm</keyword>
<keyword id="KW-0418">Kinase</keyword>
<keyword id="KW-0547">Nucleotide-binding</keyword>
<keyword id="KW-0808">Transferase</keyword>
<name>ARGB_MOOTA</name>
<organism>
    <name type="scientific">Moorella thermoacetica (strain ATCC 39073 / JCM 9320)</name>
    <dbReference type="NCBI Taxonomy" id="264732"/>
    <lineage>
        <taxon>Bacteria</taxon>
        <taxon>Bacillati</taxon>
        <taxon>Bacillota</taxon>
        <taxon>Clostridia</taxon>
        <taxon>Moorellales</taxon>
        <taxon>Moorellaceae</taxon>
        <taxon>Moorella</taxon>
    </lineage>
</organism>